<protein>
    <recommendedName>
        <fullName evidence="1">Small ribosomal subunit protein uS2</fullName>
    </recommendedName>
    <alternativeName>
        <fullName evidence="2">30S ribosomal protein S2</fullName>
    </alternativeName>
</protein>
<name>RS2_RHIR8</name>
<evidence type="ECO:0000255" key="1">
    <source>
        <dbReference type="HAMAP-Rule" id="MF_00291"/>
    </source>
</evidence>
<evidence type="ECO:0000305" key="2"/>
<gene>
    <name evidence="1" type="primary">rpsB</name>
    <name type="ordered locus">Arad_2219</name>
</gene>
<accession>B9JEX0</accession>
<reference key="1">
    <citation type="journal article" date="2009" name="J. Bacteriol.">
        <title>Genome sequences of three Agrobacterium biovars help elucidate the evolution of multichromosome genomes in bacteria.</title>
        <authorList>
            <person name="Slater S.C."/>
            <person name="Goldman B.S."/>
            <person name="Goodner B."/>
            <person name="Setubal J.C."/>
            <person name="Farrand S.K."/>
            <person name="Nester E.W."/>
            <person name="Burr T.J."/>
            <person name="Banta L."/>
            <person name="Dickerman A.W."/>
            <person name="Paulsen I."/>
            <person name="Otten L."/>
            <person name="Suen G."/>
            <person name="Welch R."/>
            <person name="Almeida N.F."/>
            <person name="Arnold F."/>
            <person name="Burton O.T."/>
            <person name="Du Z."/>
            <person name="Ewing A."/>
            <person name="Godsy E."/>
            <person name="Heisel S."/>
            <person name="Houmiel K.L."/>
            <person name="Jhaveri J."/>
            <person name="Lu J."/>
            <person name="Miller N.M."/>
            <person name="Norton S."/>
            <person name="Chen Q."/>
            <person name="Phoolcharoen W."/>
            <person name="Ohlin V."/>
            <person name="Ondrusek D."/>
            <person name="Pride N."/>
            <person name="Stricklin S.L."/>
            <person name="Sun J."/>
            <person name="Wheeler C."/>
            <person name="Wilson L."/>
            <person name="Zhu H."/>
            <person name="Wood D.W."/>
        </authorList>
    </citation>
    <scope>NUCLEOTIDE SEQUENCE [LARGE SCALE GENOMIC DNA]</scope>
    <source>
        <strain>K84 / ATCC BAA-868</strain>
    </source>
</reference>
<comment type="similarity">
    <text evidence="1">Belongs to the universal ribosomal protein uS2 family.</text>
</comment>
<proteinExistence type="inferred from homology"/>
<dbReference type="EMBL" id="CP000628">
    <property type="protein sequence ID" value="ACM26461.1"/>
    <property type="molecule type" value="Genomic_DNA"/>
</dbReference>
<dbReference type="RefSeq" id="WP_007693406.1">
    <property type="nucleotide sequence ID" value="NC_011985.1"/>
</dbReference>
<dbReference type="SMR" id="B9JEX0"/>
<dbReference type="STRING" id="311403.Arad_2219"/>
<dbReference type="GeneID" id="86848355"/>
<dbReference type="KEGG" id="ara:Arad_2219"/>
<dbReference type="eggNOG" id="COG0052">
    <property type="taxonomic scope" value="Bacteria"/>
</dbReference>
<dbReference type="HOGENOM" id="CLU_040318_2_1_5"/>
<dbReference type="Proteomes" id="UP000001600">
    <property type="component" value="Chromosome 1"/>
</dbReference>
<dbReference type="GO" id="GO:0022627">
    <property type="term" value="C:cytosolic small ribosomal subunit"/>
    <property type="evidence" value="ECO:0007669"/>
    <property type="project" value="TreeGrafter"/>
</dbReference>
<dbReference type="GO" id="GO:0003735">
    <property type="term" value="F:structural constituent of ribosome"/>
    <property type="evidence" value="ECO:0007669"/>
    <property type="project" value="InterPro"/>
</dbReference>
<dbReference type="GO" id="GO:0006412">
    <property type="term" value="P:translation"/>
    <property type="evidence" value="ECO:0007669"/>
    <property type="project" value="UniProtKB-UniRule"/>
</dbReference>
<dbReference type="CDD" id="cd01425">
    <property type="entry name" value="RPS2"/>
    <property type="match status" value="1"/>
</dbReference>
<dbReference type="FunFam" id="1.10.287.610:FF:000001">
    <property type="entry name" value="30S ribosomal protein S2"/>
    <property type="match status" value="1"/>
</dbReference>
<dbReference type="Gene3D" id="3.40.50.10490">
    <property type="entry name" value="Glucose-6-phosphate isomerase like protein, domain 1"/>
    <property type="match status" value="1"/>
</dbReference>
<dbReference type="Gene3D" id="1.10.287.610">
    <property type="entry name" value="Helix hairpin bin"/>
    <property type="match status" value="1"/>
</dbReference>
<dbReference type="HAMAP" id="MF_00291_B">
    <property type="entry name" value="Ribosomal_uS2_B"/>
    <property type="match status" value="1"/>
</dbReference>
<dbReference type="InterPro" id="IPR001865">
    <property type="entry name" value="Ribosomal_uS2"/>
</dbReference>
<dbReference type="InterPro" id="IPR005706">
    <property type="entry name" value="Ribosomal_uS2_bac/mit/plastid"/>
</dbReference>
<dbReference type="InterPro" id="IPR018130">
    <property type="entry name" value="Ribosomal_uS2_CS"/>
</dbReference>
<dbReference type="InterPro" id="IPR023591">
    <property type="entry name" value="Ribosomal_uS2_flav_dom_sf"/>
</dbReference>
<dbReference type="NCBIfam" id="TIGR01011">
    <property type="entry name" value="rpsB_bact"/>
    <property type="match status" value="1"/>
</dbReference>
<dbReference type="PANTHER" id="PTHR12534">
    <property type="entry name" value="30S RIBOSOMAL PROTEIN S2 PROKARYOTIC AND ORGANELLAR"/>
    <property type="match status" value="1"/>
</dbReference>
<dbReference type="PANTHER" id="PTHR12534:SF0">
    <property type="entry name" value="SMALL RIBOSOMAL SUBUNIT PROTEIN US2M"/>
    <property type="match status" value="1"/>
</dbReference>
<dbReference type="Pfam" id="PF00318">
    <property type="entry name" value="Ribosomal_S2"/>
    <property type="match status" value="1"/>
</dbReference>
<dbReference type="PRINTS" id="PR00395">
    <property type="entry name" value="RIBOSOMALS2"/>
</dbReference>
<dbReference type="SUPFAM" id="SSF52313">
    <property type="entry name" value="Ribosomal protein S2"/>
    <property type="match status" value="1"/>
</dbReference>
<dbReference type="PROSITE" id="PS00962">
    <property type="entry name" value="RIBOSOMAL_S2_1"/>
    <property type="match status" value="1"/>
</dbReference>
<dbReference type="PROSITE" id="PS00963">
    <property type="entry name" value="RIBOSOMAL_S2_2"/>
    <property type="match status" value="1"/>
</dbReference>
<feature type="chain" id="PRO_1000194312" description="Small ribosomal subunit protein uS2">
    <location>
        <begin position="1"/>
        <end position="256"/>
    </location>
</feature>
<sequence>MALPDFSMRQLLEAGVHFGHQTHRWNPKMKPYIFGDRNNIHIIDLAQTVPLLSRALQVVSDTVARGGRVLFVGTKRQASELIADSAKRSAQYYVNARWLGGMMTNWKTISNSIQRLRKLDEILNGDAQGFTKKERLNLEREREKLDKALGGIRDMGGTPDLMFIIDTNKEKIAIDEAKRLGIPVVAIIDSNCDPDLIDYPIPGNDDASRAIALYCDLIARAAIDGIARQQSASGRDLGASIEAPVEPTLVEGGTEA</sequence>
<organism>
    <name type="scientific">Rhizobium rhizogenes (strain K84 / ATCC BAA-868)</name>
    <name type="common">Agrobacterium radiobacter</name>
    <dbReference type="NCBI Taxonomy" id="311403"/>
    <lineage>
        <taxon>Bacteria</taxon>
        <taxon>Pseudomonadati</taxon>
        <taxon>Pseudomonadota</taxon>
        <taxon>Alphaproteobacteria</taxon>
        <taxon>Hyphomicrobiales</taxon>
        <taxon>Rhizobiaceae</taxon>
        <taxon>Rhizobium/Agrobacterium group</taxon>
        <taxon>Rhizobium</taxon>
    </lineage>
</organism>
<keyword id="KW-0687">Ribonucleoprotein</keyword>
<keyword id="KW-0689">Ribosomal protein</keyword>